<protein>
    <recommendedName>
        <fullName evidence="1">DNA-directed RNA polymerase subunit beta'</fullName>
        <shortName evidence="1">RNAP subunit beta'</shortName>
        <ecNumber evidence="1">2.7.7.6</ecNumber>
    </recommendedName>
    <alternativeName>
        <fullName evidence="1">RNA polymerase subunit beta'</fullName>
    </alternativeName>
    <alternativeName>
        <fullName evidence="1">Transcriptase subunit beta'</fullName>
    </alternativeName>
</protein>
<reference key="1">
    <citation type="journal article" date="2008" name="J. Bacteriol.">
        <title>The pangenome structure of Escherichia coli: comparative genomic analysis of E. coli commensal and pathogenic isolates.</title>
        <authorList>
            <person name="Rasko D.A."/>
            <person name="Rosovitz M.J."/>
            <person name="Myers G.S.A."/>
            <person name="Mongodin E.F."/>
            <person name="Fricke W.F."/>
            <person name="Gajer P."/>
            <person name="Crabtree J."/>
            <person name="Sebaihia M."/>
            <person name="Thomson N.R."/>
            <person name="Chaudhuri R."/>
            <person name="Henderson I.R."/>
            <person name="Sperandio V."/>
            <person name="Ravel J."/>
        </authorList>
    </citation>
    <scope>NUCLEOTIDE SEQUENCE [LARGE SCALE GENOMIC DNA]</scope>
    <source>
        <strain>E24377A / ETEC</strain>
    </source>
</reference>
<gene>
    <name evidence="1" type="primary">rpoC</name>
    <name type="ordered locus">EcE24377A_4529</name>
</gene>
<keyword id="KW-0002">3D-structure</keyword>
<keyword id="KW-0007">Acetylation</keyword>
<keyword id="KW-0240">DNA-directed RNA polymerase</keyword>
<keyword id="KW-0460">Magnesium</keyword>
<keyword id="KW-0479">Metal-binding</keyword>
<keyword id="KW-0548">Nucleotidyltransferase</keyword>
<keyword id="KW-1185">Reference proteome</keyword>
<keyword id="KW-0804">Transcription</keyword>
<keyword id="KW-0808">Transferase</keyword>
<keyword id="KW-0862">Zinc</keyword>
<organism>
    <name type="scientific">Escherichia coli O139:H28 (strain E24377A / ETEC)</name>
    <dbReference type="NCBI Taxonomy" id="331111"/>
    <lineage>
        <taxon>Bacteria</taxon>
        <taxon>Pseudomonadati</taxon>
        <taxon>Pseudomonadota</taxon>
        <taxon>Gammaproteobacteria</taxon>
        <taxon>Enterobacterales</taxon>
        <taxon>Enterobacteriaceae</taxon>
        <taxon>Escherichia</taxon>
    </lineage>
</organism>
<proteinExistence type="evidence at protein level"/>
<feature type="chain" id="PRO_0000353359" description="DNA-directed RNA polymerase subunit beta'">
    <location>
        <begin position="1"/>
        <end position="1407"/>
    </location>
</feature>
<feature type="binding site" evidence="1">
    <location>
        <position position="70"/>
    </location>
    <ligand>
        <name>Zn(2+)</name>
        <dbReference type="ChEBI" id="CHEBI:29105"/>
        <label>1</label>
    </ligand>
</feature>
<feature type="binding site" evidence="1">
    <location>
        <position position="72"/>
    </location>
    <ligand>
        <name>Zn(2+)</name>
        <dbReference type="ChEBI" id="CHEBI:29105"/>
        <label>1</label>
    </ligand>
</feature>
<feature type="binding site" evidence="1">
    <location>
        <position position="85"/>
    </location>
    <ligand>
        <name>Zn(2+)</name>
        <dbReference type="ChEBI" id="CHEBI:29105"/>
        <label>1</label>
    </ligand>
</feature>
<feature type="binding site" evidence="1">
    <location>
        <position position="88"/>
    </location>
    <ligand>
        <name>Zn(2+)</name>
        <dbReference type="ChEBI" id="CHEBI:29105"/>
        <label>1</label>
    </ligand>
</feature>
<feature type="binding site" evidence="1">
    <location>
        <position position="460"/>
    </location>
    <ligand>
        <name>Mg(2+)</name>
        <dbReference type="ChEBI" id="CHEBI:18420"/>
    </ligand>
</feature>
<feature type="binding site" evidence="1">
    <location>
        <position position="462"/>
    </location>
    <ligand>
        <name>Mg(2+)</name>
        <dbReference type="ChEBI" id="CHEBI:18420"/>
    </ligand>
</feature>
<feature type="binding site" evidence="1">
    <location>
        <position position="464"/>
    </location>
    <ligand>
        <name>Mg(2+)</name>
        <dbReference type="ChEBI" id="CHEBI:18420"/>
    </ligand>
</feature>
<feature type="binding site" evidence="1">
    <location>
        <position position="814"/>
    </location>
    <ligand>
        <name>Zn(2+)</name>
        <dbReference type="ChEBI" id="CHEBI:29105"/>
        <label>2</label>
    </ligand>
</feature>
<feature type="binding site" evidence="1">
    <location>
        <position position="888"/>
    </location>
    <ligand>
        <name>Zn(2+)</name>
        <dbReference type="ChEBI" id="CHEBI:29105"/>
        <label>2</label>
    </ligand>
</feature>
<feature type="binding site" evidence="1">
    <location>
        <position position="895"/>
    </location>
    <ligand>
        <name>Zn(2+)</name>
        <dbReference type="ChEBI" id="CHEBI:29105"/>
        <label>2</label>
    </ligand>
</feature>
<feature type="binding site" evidence="1">
    <location>
        <position position="898"/>
    </location>
    <ligand>
        <name>Zn(2+)</name>
        <dbReference type="ChEBI" id="CHEBI:29105"/>
        <label>2</label>
    </ligand>
</feature>
<feature type="modified residue" description="N6-acetyllysine" evidence="1">
    <location>
        <position position="972"/>
    </location>
</feature>
<evidence type="ECO:0000255" key="1">
    <source>
        <dbReference type="HAMAP-Rule" id="MF_01322"/>
    </source>
</evidence>
<sequence length="1407" mass="155160">MKDLLKFLKAQTKTEEFDAIKIALASPDMIRSWSFGEVKKPETINYRTFKPERDGLFCARIFGPVKDYECLCGKYKRLKHRGVICEKCGVEVTQTKVRRERMGHIELASPTAHIWFLKSLPSRIGLLLDMPLRDIERVLYFESYVVIEGGMTNLERQQILTEEQYLDALEEFGDEFDAKMGAEAIQALLKSMDLEQECEQLREELNETNSETKRKKLTKRIKLLEAFVQSGNKPEWMILTVLPVLPPDLRPLVPLDGGRFATSDLNDLYRRVINRNNRLKRLLDLAAPDIIVRNEKRMLQEAVDALLDNGRRGRAITGSNKRPLKSLADMIKGKQGRFRQNLLGKRVDYSGRSVITVGPYLRLHQCGLPKKMALELFKPFIYGKLELRGLATTIKAAKKMVEREEAVVWDILDEVIREHPVLLNRAPTLHRLGIQAFEPVLIEGKAIQLHPLVCAAYNADFDGDQMAVHVPLTLEAQLEARALMMSTNNILSPANGEPIIVPSQDVVLGLYYMTRDCVNAKGEGMVLTGPKEAERLYRSGLASLHARVKVRITEYEKDANGELVAKTSLKDTTVGRAILWMIVPKGLPYSIVNQALGKKAISKMLNTCYRILGLKPTVIFADQIMYTGFAYAARSGASVGIDDMVIPEKKHEIISEAEAEVAEIQEQFQSGLVTAGERYNKVIDIWAAANDRVSKAMMDNLQTETVINRDGQEEKQVSFNSIYMMADSGARGSAAQIRQLAGMRGLMAKPDGSIIETPITANFREGLNVLQYFISTHGARKGLADTALKTANSGYLTRRLVDVAQDLVVTEDDCGTHEGIMMTPVIEGGDVKEPLRDRVLGRVTAEDVLKPGTADILVPRNTLLHEQWCDLLEENSVDAVKVRSVVSCDTDFGVCAHCYGRDLARGHIINKGEAIGVIAAQSIGEPGTQLTMRTFHIGGAASRAAAESSIQVKNKGSIKLSNVKSVVNSSGKLVITSRNTELKLIDEFGRTKESYKVPYGAVLAKGDGEQVAGGETVANWDPHTMPVITEVSGFVRFTDMIDGQTITRQTDELTGLSSLVVLDSAERTAGGKDLRPALKIVDAQGNDVLIPGTDMPAQYFLPGKAIVQLEDGVQISSGDTLARIPQESGGTKDITGGLPRVADLFEARRPKEPAILAEISGIVSFGKETKGKRRLVITPVDGSDPYEEMIPKWRQLNVFEGERVERGDVISDGPEAPHDILRLRGVHAVTRYIVNEVQDVYRLQGVKINDKHIEVIVRQMLRKATIVNAGSSDFLEGEQVEYSRVKIANRELEANGKVGATYSRDLLGITKASLATESFISAASFQETTRVLTEAAVAGKRDELRGLKENVIVGRLIPAGTGYAYHQDRMRRRAAGEAPAAPQVTAEDASASLAELLNAGLGGSDNE</sequence>
<dbReference type="EC" id="2.7.7.6" evidence="1"/>
<dbReference type="EMBL" id="CP000800">
    <property type="protein sequence ID" value="ABV18354.1"/>
    <property type="molecule type" value="Genomic_DNA"/>
</dbReference>
<dbReference type="RefSeq" id="WP_000653944.1">
    <property type="nucleotide sequence ID" value="NC_009801.1"/>
</dbReference>
<dbReference type="PDB" id="4YFK">
    <property type="method" value="X-ray"/>
    <property type="resolution" value="3.57 A"/>
    <property type="chains" value="D/J=1-1407"/>
</dbReference>
<dbReference type="PDB" id="4YFN">
    <property type="method" value="X-ray"/>
    <property type="resolution" value="3.82 A"/>
    <property type="chains" value="D/J=1-1407"/>
</dbReference>
<dbReference type="PDB" id="4YFX">
    <property type="method" value="X-ray"/>
    <property type="resolution" value="3.84 A"/>
    <property type="chains" value="D/J=1-1407"/>
</dbReference>
<dbReference type="PDBsum" id="4YFK"/>
<dbReference type="PDBsum" id="4YFN"/>
<dbReference type="PDBsum" id="4YFX"/>
<dbReference type="EMDB" id="EMD-29676"/>
<dbReference type="EMDB" id="EMD-29812"/>
<dbReference type="SMR" id="A7ZUK2"/>
<dbReference type="GeneID" id="93777906"/>
<dbReference type="KEGG" id="ecw:EcE24377A_4529"/>
<dbReference type="HOGENOM" id="CLU_000524_3_1_6"/>
<dbReference type="Proteomes" id="UP000001122">
    <property type="component" value="Chromosome"/>
</dbReference>
<dbReference type="GO" id="GO:0000428">
    <property type="term" value="C:DNA-directed RNA polymerase complex"/>
    <property type="evidence" value="ECO:0007669"/>
    <property type="project" value="UniProtKB-KW"/>
</dbReference>
<dbReference type="GO" id="GO:0003677">
    <property type="term" value="F:DNA binding"/>
    <property type="evidence" value="ECO:0007669"/>
    <property type="project" value="UniProtKB-UniRule"/>
</dbReference>
<dbReference type="GO" id="GO:0003899">
    <property type="term" value="F:DNA-directed RNA polymerase activity"/>
    <property type="evidence" value="ECO:0007669"/>
    <property type="project" value="UniProtKB-UniRule"/>
</dbReference>
<dbReference type="GO" id="GO:0000287">
    <property type="term" value="F:magnesium ion binding"/>
    <property type="evidence" value="ECO:0007669"/>
    <property type="project" value="UniProtKB-UniRule"/>
</dbReference>
<dbReference type="GO" id="GO:0008270">
    <property type="term" value="F:zinc ion binding"/>
    <property type="evidence" value="ECO:0007669"/>
    <property type="project" value="UniProtKB-UniRule"/>
</dbReference>
<dbReference type="GO" id="GO:0006351">
    <property type="term" value="P:DNA-templated transcription"/>
    <property type="evidence" value="ECO:0007669"/>
    <property type="project" value="UniProtKB-UniRule"/>
</dbReference>
<dbReference type="CDD" id="cd02655">
    <property type="entry name" value="RNAP_beta'_C"/>
    <property type="match status" value="1"/>
</dbReference>
<dbReference type="CDD" id="cd01609">
    <property type="entry name" value="RNAP_beta'_N"/>
    <property type="match status" value="1"/>
</dbReference>
<dbReference type="DisProt" id="DP02486"/>
<dbReference type="FunFam" id="1.10.132.30:FF:000003">
    <property type="entry name" value="DNA-directed RNA polymerase subunit beta"/>
    <property type="match status" value="1"/>
</dbReference>
<dbReference type="FunFam" id="1.10.150.390:FF:000002">
    <property type="entry name" value="DNA-directed RNA polymerase subunit beta"/>
    <property type="match status" value="1"/>
</dbReference>
<dbReference type="FunFam" id="1.10.274.100:FF:000002">
    <property type="entry name" value="DNA-directed RNA polymerase subunit beta"/>
    <property type="match status" value="1"/>
</dbReference>
<dbReference type="FunFam" id="1.10.40.90:FF:000001">
    <property type="entry name" value="DNA-directed RNA polymerase subunit beta"/>
    <property type="match status" value="1"/>
</dbReference>
<dbReference type="FunFam" id="2.40.50.100:FF:000012">
    <property type="entry name" value="DNA-directed RNA polymerase subunit beta"/>
    <property type="match status" value="1"/>
</dbReference>
<dbReference type="FunFam" id="2.40.50.100:FF:000016">
    <property type="entry name" value="DNA-directed RNA polymerase subunit beta"/>
    <property type="match status" value="1"/>
</dbReference>
<dbReference type="FunFam" id="2.40.50.100:FF:000019">
    <property type="entry name" value="DNA-directed RNA polymerase subunit beta"/>
    <property type="match status" value="1"/>
</dbReference>
<dbReference type="FunFam" id="4.10.860.120:FF:000001">
    <property type="entry name" value="DNA-directed RNA polymerase subunit beta"/>
    <property type="match status" value="1"/>
</dbReference>
<dbReference type="Gene3D" id="1.10.132.30">
    <property type="match status" value="1"/>
</dbReference>
<dbReference type="Gene3D" id="1.10.150.390">
    <property type="match status" value="1"/>
</dbReference>
<dbReference type="Gene3D" id="1.10.1790.20">
    <property type="match status" value="1"/>
</dbReference>
<dbReference type="Gene3D" id="1.10.40.90">
    <property type="match status" value="1"/>
</dbReference>
<dbReference type="Gene3D" id="2.40.40.20">
    <property type="match status" value="1"/>
</dbReference>
<dbReference type="Gene3D" id="2.40.50.100">
    <property type="match status" value="3"/>
</dbReference>
<dbReference type="Gene3D" id="4.10.860.120">
    <property type="entry name" value="RNA polymerase II, clamp domain"/>
    <property type="match status" value="1"/>
</dbReference>
<dbReference type="Gene3D" id="1.10.274.100">
    <property type="entry name" value="RNA polymerase Rpb1, domain 3"/>
    <property type="match status" value="1"/>
</dbReference>
<dbReference type="HAMAP" id="MF_01322">
    <property type="entry name" value="RNApol_bact_RpoC"/>
    <property type="match status" value="1"/>
</dbReference>
<dbReference type="InterPro" id="IPR045867">
    <property type="entry name" value="DNA-dir_RpoC_beta_prime"/>
</dbReference>
<dbReference type="InterPro" id="IPR012754">
    <property type="entry name" value="DNA-dir_RpoC_beta_prime_bact"/>
</dbReference>
<dbReference type="InterPro" id="IPR000722">
    <property type="entry name" value="RNA_pol_asu"/>
</dbReference>
<dbReference type="InterPro" id="IPR006592">
    <property type="entry name" value="RNA_pol_N"/>
</dbReference>
<dbReference type="InterPro" id="IPR007080">
    <property type="entry name" value="RNA_pol_Rpb1_1"/>
</dbReference>
<dbReference type="InterPro" id="IPR007066">
    <property type="entry name" value="RNA_pol_Rpb1_3"/>
</dbReference>
<dbReference type="InterPro" id="IPR042102">
    <property type="entry name" value="RNA_pol_Rpb1_3_sf"/>
</dbReference>
<dbReference type="InterPro" id="IPR007083">
    <property type="entry name" value="RNA_pol_Rpb1_4"/>
</dbReference>
<dbReference type="InterPro" id="IPR007081">
    <property type="entry name" value="RNA_pol_Rpb1_5"/>
</dbReference>
<dbReference type="InterPro" id="IPR044893">
    <property type="entry name" value="RNA_pol_Rpb1_clamp_domain"/>
</dbReference>
<dbReference type="InterPro" id="IPR038120">
    <property type="entry name" value="Rpb1_funnel_sf"/>
</dbReference>
<dbReference type="NCBIfam" id="TIGR02386">
    <property type="entry name" value="rpoC_TIGR"/>
    <property type="match status" value="1"/>
</dbReference>
<dbReference type="PANTHER" id="PTHR19376">
    <property type="entry name" value="DNA-DIRECTED RNA POLYMERASE"/>
    <property type="match status" value="1"/>
</dbReference>
<dbReference type="PANTHER" id="PTHR19376:SF54">
    <property type="entry name" value="DNA-DIRECTED RNA POLYMERASE SUBUNIT BETA"/>
    <property type="match status" value="1"/>
</dbReference>
<dbReference type="Pfam" id="PF04997">
    <property type="entry name" value="RNA_pol_Rpb1_1"/>
    <property type="match status" value="1"/>
</dbReference>
<dbReference type="Pfam" id="PF00623">
    <property type="entry name" value="RNA_pol_Rpb1_2"/>
    <property type="match status" value="2"/>
</dbReference>
<dbReference type="Pfam" id="PF04983">
    <property type="entry name" value="RNA_pol_Rpb1_3"/>
    <property type="match status" value="1"/>
</dbReference>
<dbReference type="Pfam" id="PF05000">
    <property type="entry name" value="RNA_pol_Rpb1_4"/>
    <property type="match status" value="1"/>
</dbReference>
<dbReference type="Pfam" id="PF04998">
    <property type="entry name" value="RNA_pol_Rpb1_5"/>
    <property type="match status" value="1"/>
</dbReference>
<dbReference type="SMART" id="SM00663">
    <property type="entry name" value="RPOLA_N"/>
    <property type="match status" value="1"/>
</dbReference>
<dbReference type="SUPFAM" id="SSF64484">
    <property type="entry name" value="beta and beta-prime subunits of DNA dependent RNA-polymerase"/>
    <property type="match status" value="1"/>
</dbReference>
<accession>A7ZUK2</accession>
<name>RPOC_ECO24</name>
<comment type="function">
    <text evidence="1">DNA-dependent RNA polymerase catalyzes the transcription of DNA into RNA using the four ribonucleoside triphosphates as substrates.</text>
</comment>
<comment type="catalytic activity">
    <reaction evidence="1">
        <text>RNA(n) + a ribonucleoside 5'-triphosphate = RNA(n+1) + diphosphate</text>
        <dbReference type="Rhea" id="RHEA:21248"/>
        <dbReference type="Rhea" id="RHEA-COMP:14527"/>
        <dbReference type="Rhea" id="RHEA-COMP:17342"/>
        <dbReference type="ChEBI" id="CHEBI:33019"/>
        <dbReference type="ChEBI" id="CHEBI:61557"/>
        <dbReference type="ChEBI" id="CHEBI:140395"/>
        <dbReference type="EC" id="2.7.7.6"/>
    </reaction>
</comment>
<comment type="cofactor">
    <cofactor evidence="1">
        <name>Mg(2+)</name>
        <dbReference type="ChEBI" id="CHEBI:18420"/>
    </cofactor>
    <text evidence="1">Binds 1 Mg(2+) ion per subunit.</text>
</comment>
<comment type="cofactor">
    <cofactor evidence="1">
        <name>Zn(2+)</name>
        <dbReference type="ChEBI" id="CHEBI:29105"/>
    </cofactor>
    <text evidence="1">Binds 2 Zn(2+) ions per subunit.</text>
</comment>
<comment type="subunit">
    <text evidence="1">The RNAP catalytic core consists of 2 alpha, 1 beta, 1 beta' and 1 omega subunit. When a sigma factor is associated with the core the holoenzyme is formed, which can initiate transcription.</text>
</comment>
<comment type="similarity">
    <text evidence="1">Belongs to the RNA polymerase beta' chain family.</text>
</comment>